<evidence type="ECO:0000255" key="1"/>
<evidence type="ECO:0000305" key="2"/>
<organism>
    <name type="scientific">Bacillus subtilis (strain 168)</name>
    <dbReference type="NCBI Taxonomy" id="224308"/>
    <lineage>
        <taxon>Bacteria</taxon>
        <taxon>Bacillati</taxon>
        <taxon>Bacillota</taxon>
        <taxon>Bacilli</taxon>
        <taxon>Bacillales</taxon>
        <taxon>Bacillaceae</taxon>
        <taxon>Bacillus</taxon>
    </lineage>
</organism>
<gene>
    <name type="primary">ymzD</name>
    <name type="ordered locus">BSU17060</name>
</gene>
<sequence length="151" mass="16687">MNQKEQNEHSKDFNLRSKLIGIVSITFIAAIALAVIFGGFFFGMKGLFSILGITYASNQTLALFILACFAVGLIIDPLTKIISIILAKSLSLKKTALFAFILYFISNLITICFADYFMQSIYIPDVLLVVISAFMAIIELAFDNQPNREAA</sequence>
<feature type="chain" id="PRO_0000049637" description="Uncharacterized protein YmzD">
    <location>
        <begin position="1"/>
        <end position="151"/>
    </location>
</feature>
<feature type="transmembrane region" description="Helical" evidence="1">
    <location>
        <begin position="22"/>
        <end position="42"/>
    </location>
</feature>
<feature type="transmembrane region" description="Helical" evidence="1">
    <location>
        <begin position="62"/>
        <end position="82"/>
    </location>
</feature>
<feature type="transmembrane region" description="Helical" evidence="1">
    <location>
        <begin position="97"/>
        <end position="117"/>
    </location>
</feature>
<feature type="transmembrane region" description="Helical" evidence="1">
    <location>
        <begin position="121"/>
        <end position="141"/>
    </location>
</feature>
<dbReference type="EMBL" id="AL009126">
    <property type="protein sequence ID" value="CAE01453.1"/>
    <property type="molecule type" value="Genomic_DNA"/>
</dbReference>
<dbReference type="RefSeq" id="WP_003231830.1">
    <property type="nucleotide sequence ID" value="NZ_OZ025638.1"/>
</dbReference>
<dbReference type="RefSeq" id="YP_054578.1">
    <property type="nucleotide sequence ID" value="NC_000964.3"/>
</dbReference>
<dbReference type="SMR" id="Q7WY71"/>
<dbReference type="FunCoup" id="Q7WY71">
    <property type="interactions" value="62"/>
</dbReference>
<dbReference type="STRING" id="224308.BSU17060"/>
<dbReference type="PaxDb" id="224308-BSU17060"/>
<dbReference type="EnsemblBacteria" id="CAE01453">
    <property type="protein sequence ID" value="CAE01453"/>
    <property type="gene ID" value="BSU_17060"/>
</dbReference>
<dbReference type="GeneID" id="2914256"/>
<dbReference type="KEGG" id="bsu:BSU17060"/>
<dbReference type="PATRIC" id="fig|224308.179.peg.1847"/>
<dbReference type="eggNOG" id="ENOG5032VW3">
    <property type="taxonomic scope" value="Bacteria"/>
</dbReference>
<dbReference type="InParanoid" id="Q7WY71"/>
<dbReference type="OrthoDB" id="2936835at2"/>
<dbReference type="BioCyc" id="BSUB:BSU17060-MONOMER"/>
<dbReference type="Proteomes" id="UP000001570">
    <property type="component" value="Chromosome"/>
</dbReference>
<dbReference type="GO" id="GO:0005886">
    <property type="term" value="C:plasma membrane"/>
    <property type="evidence" value="ECO:0007669"/>
    <property type="project" value="UniProtKB-SubCell"/>
</dbReference>
<dbReference type="InterPro" id="IPR025912">
    <property type="entry name" value="YrvL"/>
</dbReference>
<dbReference type="Pfam" id="PF14184">
    <property type="entry name" value="YrvL"/>
    <property type="match status" value="1"/>
</dbReference>
<proteinExistence type="predicted"/>
<reference key="1">
    <citation type="journal article" date="1997" name="Nature">
        <title>The complete genome sequence of the Gram-positive bacterium Bacillus subtilis.</title>
        <authorList>
            <person name="Kunst F."/>
            <person name="Ogasawara N."/>
            <person name="Moszer I."/>
            <person name="Albertini A.M."/>
            <person name="Alloni G."/>
            <person name="Azevedo V."/>
            <person name="Bertero M.G."/>
            <person name="Bessieres P."/>
            <person name="Bolotin A."/>
            <person name="Borchert S."/>
            <person name="Borriss R."/>
            <person name="Boursier L."/>
            <person name="Brans A."/>
            <person name="Braun M."/>
            <person name="Brignell S.C."/>
            <person name="Bron S."/>
            <person name="Brouillet S."/>
            <person name="Bruschi C.V."/>
            <person name="Caldwell B."/>
            <person name="Capuano V."/>
            <person name="Carter N.M."/>
            <person name="Choi S.-K."/>
            <person name="Codani J.-J."/>
            <person name="Connerton I.F."/>
            <person name="Cummings N.J."/>
            <person name="Daniel R.A."/>
            <person name="Denizot F."/>
            <person name="Devine K.M."/>
            <person name="Duesterhoeft A."/>
            <person name="Ehrlich S.D."/>
            <person name="Emmerson P.T."/>
            <person name="Entian K.-D."/>
            <person name="Errington J."/>
            <person name="Fabret C."/>
            <person name="Ferrari E."/>
            <person name="Foulger D."/>
            <person name="Fritz C."/>
            <person name="Fujita M."/>
            <person name="Fujita Y."/>
            <person name="Fuma S."/>
            <person name="Galizzi A."/>
            <person name="Galleron N."/>
            <person name="Ghim S.-Y."/>
            <person name="Glaser P."/>
            <person name="Goffeau A."/>
            <person name="Golightly E.J."/>
            <person name="Grandi G."/>
            <person name="Guiseppi G."/>
            <person name="Guy B.J."/>
            <person name="Haga K."/>
            <person name="Haiech J."/>
            <person name="Harwood C.R."/>
            <person name="Henaut A."/>
            <person name="Hilbert H."/>
            <person name="Holsappel S."/>
            <person name="Hosono S."/>
            <person name="Hullo M.-F."/>
            <person name="Itaya M."/>
            <person name="Jones L.-M."/>
            <person name="Joris B."/>
            <person name="Karamata D."/>
            <person name="Kasahara Y."/>
            <person name="Klaerr-Blanchard M."/>
            <person name="Klein C."/>
            <person name="Kobayashi Y."/>
            <person name="Koetter P."/>
            <person name="Koningstein G."/>
            <person name="Krogh S."/>
            <person name="Kumano M."/>
            <person name="Kurita K."/>
            <person name="Lapidus A."/>
            <person name="Lardinois S."/>
            <person name="Lauber J."/>
            <person name="Lazarevic V."/>
            <person name="Lee S.-M."/>
            <person name="Levine A."/>
            <person name="Liu H."/>
            <person name="Masuda S."/>
            <person name="Mauel C."/>
            <person name="Medigue C."/>
            <person name="Medina N."/>
            <person name="Mellado R.P."/>
            <person name="Mizuno M."/>
            <person name="Moestl D."/>
            <person name="Nakai S."/>
            <person name="Noback M."/>
            <person name="Noone D."/>
            <person name="O'Reilly M."/>
            <person name="Ogawa K."/>
            <person name="Ogiwara A."/>
            <person name="Oudega B."/>
            <person name="Park S.-H."/>
            <person name="Parro V."/>
            <person name="Pohl T.M."/>
            <person name="Portetelle D."/>
            <person name="Porwollik S."/>
            <person name="Prescott A.M."/>
            <person name="Presecan E."/>
            <person name="Pujic P."/>
            <person name="Purnelle B."/>
            <person name="Rapoport G."/>
            <person name="Rey M."/>
            <person name="Reynolds S."/>
            <person name="Rieger M."/>
            <person name="Rivolta C."/>
            <person name="Rocha E."/>
            <person name="Roche B."/>
            <person name="Rose M."/>
            <person name="Sadaie Y."/>
            <person name="Sato T."/>
            <person name="Scanlan E."/>
            <person name="Schleich S."/>
            <person name="Schroeter R."/>
            <person name="Scoffone F."/>
            <person name="Sekiguchi J."/>
            <person name="Sekowska A."/>
            <person name="Seror S.J."/>
            <person name="Serror P."/>
            <person name="Shin B.-S."/>
            <person name="Soldo B."/>
            <person name="Sorokin A."/>
            <person name="Tacconi E."/>
            <person name="Takagi T."/>
            <person name="Takahashi H."/>
            <person name="Takemaru K."/>
            <person name="Takeuchi M."/>
            <person name="Tamakoshi A."/>
            <person name="Tanaka T."/>
            <person name="Terpstra P."/>
            <person name="Tognoni A."/>
            <person name="Tosato V."/>
            <person name="Uchiyama S."/>
            <person name="Vandenbol M."/>
            <person name="Vannier F."/>
            <person name="Vassarotti A."/>
            <person name="Viari A."/>
            <person name="Wambutt R."/>
            <person name="Wedler E."/>
            <person name="Wedler H."/>
            <person name="Weitzenegger T."/>
            <person name="Winters P."/>
            <person name="Wipat A."/>
            <person name="Yamamoto H."/>
            <person name="Yamane K."/>
            <person name="Yasumoto K."/>
            <person name="Yata K."/>
            <person name="Yoshida K."/>
            <person name="Yoshikawa H.-F."/>
            <person name="Zumstein E."/>
            <person name="Yoshikawa H."/>
            <person name="Danchin A."/>
        </authorList>
    </citation>
    <scope>NUCLEOTIDE SEQUENCE [LARGE SCALE GENOMIC DNA]</scope>
    <source>
        <strain>168</strain>
    </source>
</reference>
<name>YMZD_BACSU</name>
<keyword id="KW-1003">Cell membrane</keyword>
<keyword id="KW-0472">Membrane</keyword>
<keyword id="KW-1185">Reference proteome</keyword>
<keyword id="KW-0812">Transmembrane</keyword>
<keyword id="KW-1133">Transmembrane helix</keyword>
<comment type="subcellular location">
    <subcellularLocation>
        <location evidence="2">Cell membrane</location>
        <topology evidence="2">Multi-pass membrane protein</topology>
    </subcellularLocation>
</comment>
<protein>
    <recommendedName>
        <fullName>Uncharacterized protein YmzD</fullName>
    </recommendedName>
</protein>
<accession>Q7WY71</accession>